<accession>Q133L2</accession>
<gene>
    <name evidence="1" type="primary">ureA</name>
    <name type="ordered locus">RPD_3504</name>
</gene>
<sequence>MNLSPREKDKLLISMAAMVARRRLERGVRLNHPEAIAIISDFIVEGARDGRTVAELMQAGAEVLTREQCMDGIAEMIHDIQVEATFPDGTKLVTVHQPIR</sequence>
<dbReference type="EC" id="3.5.1.5" evidence="1"/>
<dbReference type="EMBL" id="CP000283">
    <property type="protein sequence ID" value="ABE40727.1"/>
    <property type="molecule type" value="Genomic_DNA"/>
</dbReference>
<dbReference type="SMR" id="Q133L2"/>
<dbReference type="STRING" id="316057.RPD_3504"/>
<dbReference type="KEGG" id="rpd:RPD_3504"/>
<dbReference type="eggNOG" id="COG0831">
    <property type="taxonomic scope" value="Bacteria"/>
</dbReference>
<dbReference type="HOGENOM" id="CLU_145825_1_0_5"/>
<dbReference type="BioCyc" id="RPAL316057:RPD_RS17620-MONOMER"/>
<dbReference type="UniPathway" id="UPA00258">
    <property type="reaction ID" value="UER00370"/>
</dbReference>
<dbReference type="Proteomes" id="UP000001818">
    <property type="component" value="Chromosome"/>
</dbReference>
<dbReference type="GO" id="GO:0005737">
    <property type="term" value="C:cytoplasm"/>
    <property type="evidence" value="ECO:0007669"/>
    <property type="project" value="UniProtKB-SubCell"/>
</dbReference>
<dbReference type="GO" id="GO:0016151">
    <property type="term" value="F:nickel cation binding"/>
    <property type="evidence" value="ECO:0007669"/>
    <property type="project" value="InterPro"/>
</dbReference>
<dbReference type="GO" id="GO:0009039">
    <property type="term" value="F:urease activity"/>
    <property type="evidence" value="ECO:0007669"/>
    <property type="project" value="UniProtKB-UniRule"/>
</dbReference>
<dbReference type="GO" id="GO:0043419">
    <property type="term" value="P:urea catabolic process"/>
    <property type="evidence" value="ECO:0007669"/>
    <property type="project" value="UniProtKB-UniRule"/>
</dbReference>
<dbReference type="CDD" id="cd00390">
    <property type="entry name" value="Urease_gamma"/>
    <property type="match status" value="1"/>
</dbReference>
<dbReference type="Gene3D" id="3.30.280.10">
    <property type="entry name" value="Urease, gamma-like subunit"/>
    <property type="match status" value="1"/>
</dbReference>
<dbReference type="HAMAP" id="MF_00739">
    <property type="entry name" value="Urease_gamma"/>
    <property type="match status" value="1"/>
</dbReference>
<dbReference type="InterPro" id="IPR012010">
    <property type="entry name" value="Urease_gamma"/>
</dbReference>
<dbReference type="InterPro" id="IPR002026">
    <property type="entry name" value="Urease_gamma/gamma-beta_su"/>
</dbReference>
<dbReference type="InterPro" id="IPR036463">
    <property type="entry name" value="Urease_gamma_sf"/>
</dbReference>
<dbReference type="InterPro" id="IPR050069">
    <property type="entry name" value="Urease_subunit"/>
</dbReference>
<dbReference type="NCBIfam" id="NF009712">
    <property type="entry name" value="PRK13241.1"/>
    <property type="match status" value="1"/>
</dbReference>
<dbReference type="NCBIfam" id="TIGR00193">
    <property type="entry name" value="urease_gam"/>
    <property type="match status" value="1"/>
</dbReference>
<dbReference type="PANTHER" id="PTHR33569">
    <property type="entry name" value="UREASE"/>
    <property type="match status" value="1"/>
</dbReference>
<dbReference type="PANTHER" id="PTHR33569:SF1">
    <property type="entry name" value="UREASE"/>
    <property type="match status" value="1"/>
</dbReference>
<dbReference type="Pfam" id="PF00547">
    <property type="entry name" value="Urease_gamma"/>
    <property type="match status" value="1"/>
</dbReference>
<dbReference type="PIRSF" id="PIRSF001223">
    <property type="entry name" value="Urease_gamma"/>
    <property type="match status" value="1"/>
</dbReference>
<dbReference type="SUPFAM" id="SSF54111">
    <property type="entry name" value="Urease, gamma-subunit"/>
    <property type="match status" value="1"/>
</dbReference>
<organism>
    <name type="scientific">Rhodopseudomonas palustris (strain BisB5)</name>
    <dbReference type="NCBI Taxonomy" id="316057"/>
    <lineage>
        <taxon>Bacteria</taxon>
        <taxon>Pseudomonadati</taxon>
        <taxon>Pseudomonadota</taxon>
        <taxon>Alphaproteobacteria</taxon>
        <taxon>Hyphomicrobiales</taxon>
        <taxon>Nitrobacteraceae</taxon>
        <taxon>Rhodopseudomonas</taxon>
    </lineage>
</organism>
<protein>
    <recommendedName>
        <fullName evidence="1">Urease subunit gamma</fullName>
        <ecNumber evidence="1">3.5.1.5</ecNumber>
    </recommendedName>
    <alternativeName>
        <fullName evidence="1">Urea amidohydrolase subunit gamma</fullName>
    </alternativeName>
</protein>
<name>URE3_RHOPS</name>
<evidence type="ECO:0000255" key="1">
    <source>
        <dbReference type="HAMAP-Rule" id="MF_00739"/>
    </source>
</evidence>
<keyword id="KW-0963">Cytoplasm</keyword>
<keyword id="KW-0378">Hydrolase</keyword>
<feature type="chain" id="PRO_1000046362" description="Urease subunit gamma">
    <location>
        <begin position="1"/>
        <end position="100"/>
    </location>
</feature>
<comment type="catalytic activity">
    <reaction evidence="1">
        <text>urea + 2 H2O + H(+) = hydrogencarbonate + 2 NH4(+)</text>
        <dbReference type="Rhea" id="RHEA:20557"/>
        <dbReference type="ChEBI" id="CHEBI:15377"/>
        <dbReference type="ChEBI" id="CHEBI:15378"/>
        <dbReference type="ChEBI" id="CHEBI:16199"/>
        <dbReference type="ChEBI" id="CHEBI:17544"/>
        <dbReference type="ChEBI" id="CHEBI:28938"/>
        <dbReference type="EC" id="3.5.1.5"/>
    </reaction>
</comment>
<comment type="pathway">
    <text evidence="1">Nitrogen metabolism; urea degradation; CO(2) and NH(3) from urea (urease route): step 1/1.</text>
</comment>
<comment type="subunit">
    <text evidence="1">Heterotrimer of UreA (gamma), UreB (beta) and UreC (alpha) subunits. Three heterotrimers associate to form the active enzyme.</text>
</comment>
<comment type="subcellular location">
    <subcellularLocation>
        <location evidence="1">Cytoplasm</location>
    </subcellularLocation>
</comment>
<comment type="similarity">
    <text evidence="1">Belongs to the urease gamma subunit family.</text>
</comment>
<proteinExistence type="inferred from homology"/>
<reference key="1">
    <citation type="submission" date="2006-03" db="EMBL/GenBank/DDBJ databases">
        <title>Complete sequence of Rhodopseudomonas palustris BisB5.</title>
        <authorList>
            <consortium name="US DOE Joint Genome Institute"/>
            <person name="Copeland A."/>
            <person name="Lucas S."/>
            <person name="Lapidus A."/>
            <person name="Barry K."/>
            <person name="Detter J.C."/>
            <person name="Glavina del Rio T."/>
            <person name="Hammon N."/>
            <person name="Israni S."/>
            <person name="Dalin E."/>
            <person name="Tice H."/>
            <person name="Pitluck S."/>
            <person name="Chain P."/>
            <person name="Malfatti S."/>
            <person name="Shin M."/>
            <person name="Vergez L."/>
            <person name="Schmutz J."/>
            <person name="Larimer F."/>
            <person name="Land M."/>
            <person name="Hauser L."/>
            <person name="Pelletier D.A."/>
            <person name="Kyrpides N."/>
            <person name="Lykidis A."/>
            <person name="Oda Y."/>
            <person name="Harwood C.S."/>
            <person name="Richardson P."/>
        </authorList>
    </citation>
    <scope>NUCLEOTIDE SEQUENCE [LARGE SCALE GENOMIC DNA]</scope>
    <source>
        <strain>BisB5</strain>
    </source>
</reference>